<protein>
    <recommendedName>
        <fullName evidence="1">Protein GrpE</fullName>
    </recommendedName>
    <alternativeName>
        <fullName evidence="1">HSP-70 cofactor</fullName>
    </alternativeName>
</protein>
<comment type="function">
    <text evidence="1">Participates actively in the response to hyperosmotic and heat shock by preventing the aggregation of stress-denatured proteins, in association with DnaK and GrpE. It is the nucleotide exchange factor for DnaK and may function as a thermosensor. Unfolded proteins bind initially to DnaJ; upon interaction with the DnaJ-bound protein, DnaK hydrolyzes its bound ATP, resulting in the formation of a stable complex. GrpE releases ADP from DnaK; ATP binding to DnaK triggers the release of the substrate protein, thus completing the reaction cycle. Several rounds of ATP-dependent interactions between DnaJ, DnaK and GrpE are required for fully efficient folding.</text>
</comment>
<comment type="subunit">
    <text evidence="1">Homodimer.</text>
</comment>
<comment type="subcellular location">
    <subcellularLocation>
        <location evidence="1">Cytoplasm</location>
    </subcellularLocation>
</comment>
<comment type="similarity">
    <text evidence="1">Belongs to the GrpE family.</text>
</comment>
<gene>
    <name evidence="1" type="primary">grpE</name>
    <name type="ordered locus">Plut_1488</name>
</gene>
<proteinExistence type="inferred from homology"/>
<keyword id="KW-0143">Chaperone</keyword>
<keyword id="KW-0963">Cytoplasm</keyword>
<keyword id="KW-1185">Reference proteome</keyword>
<keyword id="KW-0346">Stress response</keyword>
<sequence length="198" mass="22308">MMKKAEDPLQDREGTIQEHTEGQAGTAAADQSAAVETPESRIAGLEREVQAEKEQNGKFRDELLRRAAEFENFRKQKEREAVMASQRATDNVLRDLLTLVDDVERVLANVPEPEEIPAAAKPYIDGVELLKKNLDRWLESKGVKPIEAIGMKLDVDFHEAISQIEHPDAEPETIVEQYQTGYLLGDRVLRHAKVIVAR</sequence>
<feature type="chain" id="PRO_1000085119" description="Protein GrpE">
    <location>
        <begin position="1"/>
        <end position="198"/>
    </location>
</feature>
<feature type="region of interest" description="Disordered" evidence="2">
    <location>
        <begin position="1"/>
        <end position="56"/>
    </location>
</feature>
<feature type="compositionally biased region" description="Basic and acidic residues" evidence="2">
    <location>
        <begin position="1"/>
        <end position="21"/>
    </location>
</feature>
<feature type="compositionally biased region" description="Low complexity" evidence="2">
    <location>
        <begin position="22"/>
        <end position="34"/>
    </location>
</feature>
<feature type="compositionally biased region" description="Basic and acidic residues" evidence="2">
    <location>
        <begin position="44"/>
        <end position="56"/>
    </location>
</feature>
<organism>
    <name type="scientific">Chlorobium luteolum (strain DSM 273 / BCRC 81028 / 2530)</name>
    <name type="common">Pelodictyon luteolum</name>
    <dbReference type="NCBI Taxonomy" id="319225"/>
    <lineage>
        <taxon>Bacteria</taxon>
        <taxon>Pseudomonadati</taxon>
        <taxon>Chlorobiota</taxon>
        <taxon>Chlorobiia</taxon>
        <taxon>Chlorobiales</taxon>
        <taxon>Chlorobiaceae</taxon>
        <taxon>Chlorobium/Pelodictyon group</taxon>
        <taxon>Pelodictyon</taxon>
    </lineage>
</organism>
<accession>Q3B2T4</accession>
<reference key="1">
    <citation type="submission" date="2005-08" db="EMBL/GenBank/DDBJ databases">
        <title>Complete sequence of Pelodictyon luteolum DSM 273.</title>
        <authorList>
            <consortium name="US DOE Joint Genome Institute"/>
            <person name="Copeland A."/>
            <person name="Lucas S."/>
            <person name="Lapidus A."/>
            <person name="Barry K."/>
            <person name="Detter J.C."/>
            <person name="Glavina T."/>
            <person name="Hammon N."/>
            <person name="Israni S."/>
            <person name="Pitluck S."/>
            <person name="Bryant D."/>
            <person name="Schmutz J."/>
            <person name="Larimer F."/>
            <person name="Land M."/>
            <person name="Kyrpides N."/>
            <person name="Ivanova N."/>
            <person name="Richardson P."/>
        </authorList>
    </citation>
    <scope>NUCLEOTIDE SEQUENCE [LARGE SCALE GENOMIC DNA]</scope>
    <source>
        <strain>DSM 273 / BCRC 81028 / 2530</strain>
    </source>
</reference>
<name>GRPE_CHLL3</name>
<evidence type="ECO:0000255" key="1">
    <source>
        <dbReference type="HAMAP-Rule" id="MF_01151"/>
    </source>
</evidence>
<evidence type="ECO:0000256" key="2">
    <source>
        <dbReference type="SAM" id="MobiDB-lite"/>
    </source>
</evidence>
<dbReference type="EMBL" id="CP000096">
    <property type="protein sequence ID" value="ABB24347.1"/>
    <property type="molecule type" value="Genomic_DNA"/>
</dbReference>
<dbReference type="RefSeq" id="WP_011358219.1">
    <property type="nucleotide sequence ID" value="NC_007512.1"/>
</dbReference>
<dbReference type="SMR" id="Q3B2T4"/>
<dbReference type="STRING" id="319225.Plut_1488"/>
<dbReference type="KEGG" id="plt:Plut_1488"/>
<dbReference type="eggNOG" id="COG0576">
    <property type="taxonomic scope" value="Bacteria"/>
</dbReference>
<dbReference type="HOGENOM" id="CLU_057217_5_2_10"/>
<dbReference type="OrthoDB" id="9812586at2"/>
<dbReference type="Proteomes" id="UP000002709">
    <property type="component" value="Chromosome"/>
</dbReference>
<dbReference type="GO" id="GO:0005737">
    <property type="term" value="C:cytoplasm"/>
    <property type="evidence" value="ECO:0007669"/>
    <property type="project" value="UniProtKB-SubCell"/>
</dbReference>
<dbReference type="GO" id="GO:0000774">
    <property type="term" value="F:adenyl-nucleotide exchange factor activity"/>
    <property type="evidence" value="ECO:0007669"/>
    <property type="project" value="InterPro"/>
</dbReference>
<dbReference type="GO" id="GO:0042803">
    <property type="term" value="F:protein homodimerization activity"/>
    <property type="evidence" value="ECO:0007669"/>
    <property type="project" value="InterPro"/>
</dbReference>
<dbReference type="GO" id="GO:0051087">
    <property type="term" value="F:protein-folding chaperone binding"/>
    <property type="evidence" value="ECO:0007669"/>
    <property type="project" value="InterPro"/>
</dbReference>
<dbReference type="GO" id="GO:0051082">
    <property type="term" value="F:unfolded protein binding"/>
    <property type="evidence" value="ECO:0007669"/>
    <property type="project" value="TreeGrafter"/>
</dbReference>
<dbReference type="GO" id="GO:0006457">
    <property type="term" value="P:protein folding"/>
    <property type="evidence" value="ECO:0007669"/>
    <property type="project" value="InterPro"/>
</dbReference>
<dbReference type="CDD" id="cd00446">
    <property type="entry name" value="GrpE"/>
    <property type="match status" value="1"/>
</dbReference>
<dbReference type="Gene3D" id="3.90.20.20">
    <property type="match status" value="1"/>
</dbReference>
<dbReference type="Gene3D" id="2.30.22.10">
    <property type="entry name" value="Head domain of nucleotide exchange factor GrpE"/>
    <property type="match status" value="1"/>
</dbReference>
<dbReference type="HAMAP" id="MF_01151">
    <property type="entry name" value="GrpE"/>
    <property type="match status" value="1"/>
</dbReference>
<dbReference type="InterPro" id="IPR000740">
    <property type="entry name" value="GrpE"/>
</dbReference>
<dbReference type="InterPro" id="IPR013805">
    <property type="entry name" value="GrpE_coiled_coil"/>
</dbReference>
<dbReference type="InterPro" id="IPR009012">
    <property type="entry name" value="GrpE_head"/>
</dbReference>
<dbReference type="PANTHER" id="PTHR21237">
    <property type="entry name" value="GRPE PROTEIN"/>
    <property type="match status" value="1"/>
</dbReference>
<dbReference type="PANTHER" id="PTHR21237:SF23">
    <property type="entry name" value="GRPE PROTEIN HOMOLOG, MITOCHONDRIAL"/>
    <property type="match status" value="1"/>
</dbReference>
<dbReference type="Pfam" id="PF01025">
    <property type="entry name" value="GrpE"/>
    <property type="match status" value="1"/>
</dbReference>
<dbReference type="PRINTS" id="PR00773">
    <property type="entry name" value="GRPEPROTEIN"/>
</dbReference>
<dbReference type="SUPFAM" id="SSF58014">
    <property type="entry name" value="Coiled-coil domain of nucleotide exchange factor GrpE"/>
    <property type="match status" value="1"/>
</dbReference>
<dbReference type="SUPFAM" id="SSF51064">
    <property type="entry name" value="Head domain of nucleotide exchange factor GrpE"/>
    <property type="match status" value="1"/>
</dbReference>
<dbReference type="PROSITE" id="PS01071">
    <property type="entry name" value="GRPE"/>
    <property type="match status" value="1"/>
</dbReference>